<accession>D4AXK7</accession>
<organism>
    <name type="scientific">Arthroderma benhamiae (strain ATCC MYA-4681 / CBS 112371)</name>
    <name type="common">Trichophyton mentagrophytes</name>
    <dbReference type="NCBI Taxonomy" id="663331"/>
    <lineage>
        <taxon>Eukaryota</taxon>
        <taxon>Fungi</taxon>
        <taxon>Dikarya</taxon>
        <taxon>Ascomycota</taxon>
        <taxon>Pezizomycotina</taxon>
        <taxon>Eurotiomycetes</taxon>
        <taxon>Eurotiomycetidae</taxon>
        <taxon>Onygenales</taxon>
        <taxon>Arthrodermataceae</taxon>
        <taxon>Trichophyton</taxon>
    </lineage>
</organism>
<gene>
    <name type="ORF">ARB_00926</name>
</gene>
<dbReference type="EMBL" id="ABSU01000017">
    <property type="protein sequence ID" value="EFE32035.1"/>
    <property type="molecule type" value="Genomic_DNA"/>
</dbReference>
<dbReference type="RefSeq" id="XP_003012675.1">
    <property type="nucleotide sequence ID" value="XM_003012629.1"/>
</dbReference>
<dbReference type="SMR" id="D4AXK7"/>
<dbReference type="GeneID" id="9522753"/>
<dbReference type="KEGG" id="abe:ARB_00926"/>
<dbReference type="eggNOG" id="ENOG502SU1E">
    <property type="taxonomic scope" value="Eukaryota"/>
</dbReference>
<dbReference type="HOGENOM" id="CLU_095070_1_1_1"/>
<dbReference type="OMA" id="RWHAVWE"/>
<dbReference type="Proteomes" id="UP000008866">
    <property type="component" value="Unassembled WGS sequence"/>
</dbReference>
<dbReference type="GO" id="GO:0005576">
    <property type="term" value="C:extracellular region"/>
    <property type="evidence" value="ECO:0007669"/>
    <property type="project" value="UniProtKB-SubCell"/>
</dbReference>
<dbReference type="Gene3D" id="2.60.40.2970">
    <property type="match status" value="1"/>
</dbReference>
<protein>
    <recommendedName>
        <fullName evidence="4">Uncharacterized secreted protein ARB_00926</fullName>
    </recommendedName>
</protein>
<evidence type="ECO:0000255" key="1"/>
<evidence type="ECO:0000269" key="2">
    <source>
    </source>
</evidence>
<evidence type="ECO:0000269" key="3">
    <source>
    </source>
</evidence>
<evidence type="ECO:0000305" key="4"/>
<name>A0926_ARTBC</name>
<keyword id="KW-1185">Reference proteome</keyword>
<keyword id="KW-0964">Secreted</keyword>
<keyword id="KW-0732">Signal</keyword>
<comment type="subcellular location">
    <subcellularLocation>
        <location evidence="2 3">Secreted</location>
    </subcellularLocation>
</comment>
<proteinExistence type="evidence at protein level"/>
<reference key="1">
    <citation type="journal article" date="2011" name="Genome Biol.">
        <title>Comparative and functional genomics provide insights into the pathogenicity of dermatophytic fungi.</title>
        <authorList>
            <person name="Burmester A."/>
            <person name="Shelest E."/>
            <person name="Gloeckner G."/>
            <person name="Heddergott C."/>
            <person name="Schindler S."/>
            <person name="Staib P."/>
            <person name="Heidel A."/>
            <person name="Felder M."/>
            <person name="Petzold A."/>
            <person name="Szafranski K."/>
            <person name="Feuermann M."/>
            <person name="Pedruzzi I."/>
            <person name="Priebe S."/>
            <person name="Groth M."/>
            <person name="Winkler R."/>
            <person name="Li W."/>
            <person name="Kniemeyer O."/>
            <person name="Schroeckh V."/>
            <person name="Hertweck C."/>
            <person name="Hube B."/>
            <person name="White T.C."/>
            <person name="Platzer M."/>
            <person name="Guthke R."/>
            <person name="Heitman J."/>
            <person name="Woestemeyer J."/>
            <person name="Zipfel P.F."/>
            <person name="Monod M."/>
            <person name="Brakhage A.A."/>
        </authorList>
    </citation>
    <scope>NUCLEOTIDE SEQUENCE [LARGE SCALE GENOMIC DNA]</scope>
    <scope>IDENTIFICATION BY MASS SPECTROMETRY</scope>
    <scope>SUBCELLULAR LOCATION</scope>
    <source>
        <strain>ATCC MYA-4681 / CBS 112371</strain>
    </source>
</reference>
<reference key="2">
    <citation type="journal article" date="2011" name="Proteomics">
        <title>Identification of novel secreted proteases during extracellular proteolysis by dermatophytes at acidic pH.</title>
        <authorList>
            <person name="Sriranganadane D."/>
            <person name="Waridel P."/>
            <person name="Salamin K."/>
            <person name="Feuermann M."/>
            <person name="Mignon B."/>
            <person name="Staib P."/>
            <person name="Neuhaus J.M."/>
            <person name="Quadroni M."/>
            <person name="Monod M."/>
        </authorList>
    </citation>
    <scope>IDENTIFICATION BY MASS SPECTROMETRY</scope>
    <scope>SUBCELLULAR LOCATION</scope>
</reference>
<feature type="signal peptide" evidence="1">
    <location>
        <begin position="1"/>
        <end position="27"/>
    </location>
</feature>
<feature type="chain" id="PRO_5003053744" description="Uncharacterized secreted protein ARB_00926">
    <location>
        <begin position="28"/>
        <end position="196"/>
    </location>
</feature>
<sequence length="196" mass="21011">MSVLSRAVQLAFVALGLCLFFSNLVAAQPIAGPSLGVSVKSVNGVCRASKPCELEVTVRNTNTKKPATVLNWNTPLDPYADQLGVFEVRDSKGAVVPLDFIQIRRITPPPASDLVEIKAASSVKVKVALETLSRAELPAGTKYTITATGWWQAVWDQPKEQVVQSHLQELSGAFSGNFNSNSVQVTKVCSSSSPQQ</sequence>